<protein>
    <recommendedName>
        <fullName evidence="1">Small ribosomal subunit protein bS18</fullName>
    </recommendedName>
    <alternativeName>
        <fullName evidence="2">30S ribosomal protein S18</fullName>
    </alternativeName>
</protein>
<proteinExistence type="inferred from homology"/>
<evidence type="ECO:0000255" key="1">
    <source>
        <dbReference type="HAMAP-Rule" id="MF_00270"/>
    </source>
</evidence>
<evidence type="ECO:0000305" key="2"/>
<comment type="function">
    <text evidence="1">Binds as a heterodimer with protein bS6 to the central domain of the 16S rRNA, where it helps stabilize the platform of the 30S subunit.</text>
</comment>
<comment type="subunit">
    <text evidence="1">Part of the 30S ribosomal subunit. Forms a tight heterodimer with protein bS6.</text>
</comment>
<comment type="similarity">
    <text evidence="1">Belongs to the bacterial ribosomal protein bS18 family.</text>
</comment>
<reference key="1">
    <citation type="journal article" date="2008" name="Appl. Environ. Microbiol.">
        <title>Genome of the epsilonproteobacterial chemolithoautotroph Sulfurimonas denitrificans.</title>
        <authorList>
            <person name="Sievert S.M."/>
            <person name="Scott K.M."/>
            <person name="Klotz M.G."/>
            <person name="Chain P.S.G."/>
            <person name="Hauser L.J."/>
            <person name="Hemp J."/>
            <person name="Huegler M."/>
            <person name="Land M."/>
            <person name="Lapidus A."/>
            <person name="Larimer F.W."/>
            <person name="Lucas S."/>
            <person name="Malfatti S.A."/>
            <person name="Meyer F."/>
            <person name="Paulsen I.T."/>
            <person name="Ren Q."/>
            <person name="Simon J."/>
            <person name="Bailey K."/>
            <person name="Diaz E."/>
            <person name="Fitzpatrick K.A."/>
            <person name="Glover B."/>
            <person name="Gwatney N."/>
            <person name="Korajkic A."/>
            <person name="Long A."/>
            <person name="Mobberley J.M."/>
            <person name="Pantry S.N."/>
            <person name="Pazder G."/>
            <person name="Peterson S."/>
            <person name="Quintanilla J.D."/>
            <person name="Sprinkle R."/>
            <person name="Stephens J."/>
            <person name="Thomas P."/>
            <person name="Vaughn R."/>
            <person name="Weber M.J."/>
            <person name="Wooten L.L."/>
        </authorList>
    </citation>
    <scope>NUCLEOTIDE SEQUENCE [LARGE SCALE GENOMIC DNA]</scope>
    <source>
        <strain>ATCC 33889 / DSM 1251</strain>
    </source>
</reference>
<gene>
    <name evidence="1" type="primary">rpsR</name>
    <name type="ordered locus">Suden_1662</name>
</gene>
<organism>
    <name type="scientific">Sulfurimonas denitrificans (strain ATCC 33889 / DSM 1251)</name>
    <name type="common">Thiomicrospira denitrificans (strain ATCC 33889 / DSM 1251)</name>
    <dbReference type="NCBI Taxonomy" id="326298"/>
    <lineage>
        <taxon>Bacteria</taxon>
        <taxon>Pseudomonadati</taxon>
        <taxon>Campylobacterota</taxon>
        <taxon>Epsilonproteobacteria</taxon>
        <taxon>Campylobacterales</taxon>
        <taxon>Sulfurimonadaceae</taxon>
        <taxon>Sulfurimonas</taxon>
    </lineage>
</organism>
<dbReference type="EMBL" id="CP000153">
    <property type="protein sequence ID" value="ABB44939.1"/>
    <property type="molecule type" value="Genomic_DNA"/>
</dbReference>
<dbReference type="RefSeq" id="WP_011373280.1">
    <property type="nucleotide sequence ID" value="NC_007575.1"/>
</dbReference>
<dbReference type="SMR" id="Q30PZ2"/>
<dbReference type="STRING" id="326298.Suden_1662"/>
<dbReference type="KEGG" id="tdn:Suden_1662"/>
<dbReference type="eggNOG" id="COG0238">
    <property type="taxonomic scope" value="Bacteria"/>
</dbReference>
<dbReference type="HOGENOM" id="CLU_148710_2_2_7"/>
<dbReference type="OrthoDB" id="9812008at2"/>
<dbReference type="Proteomes" id="UP000002714">
    <property type="component" value="Chromosome"/>
</dbReference>
<dbReference type="GO" id="GO:0022627">
    <property type="term" value="C:cytosolic small ribosomal subunit"/>
    <property type="evidence" value="ECO:0007669"/>
    <property type="project" value="TreeGrafter"/>
</dbReference>
<dbReference type="GO" id="GO:0070181">
    <property type="term" value="F:small ribosomal subunit rRNA binding"/>
    <property type="evidence" value="ECO:0007669"/>
    <property type="project" value="TreeGrafter"/>
</dbReference>
<dbReference type="GO" id="GO:0003735">
    <property type="term" value="F:structural constituent of ribosome"/>
    <property type="evidence" value="ECO:0007669"/>
    <property type="project" value="InterPro"/>
</dbReference>
<dbReference type="GO" id="GO:0006412">
    <property type="term" value="P:translation"/>
    <property type="evidence" value="ECO:0007669"/>
    <property type="project" value="UniProtKB-UniRule"/>
</dbReference>
<dbReference type="Gene3D" id="4.10.640.10">
    <property type="entry name" value="Ribosomal protein S18"/>
    <property type="match status" value="1"/>
</dbReference>
<dbReference type="HAMAP" id="MF_00270">
    <property type="entry name" value="Ribosomal_bS18"/>
    <property type="match status" value="1"/>
</dbReference>
<dbReference type="InterPro" id="IPR001648">
    <property type="entry name" value="Ribosomal_bS18"/>
</dbReference>
<dbReference type="InterPro" id="IPR036870">
    <property type="entry name" value="Ribosomal_bS18_sf"/>
</dbReference>
<dbReference type="NCBIfam" id="TIGR00165">
    <property type="entry name" value="S18"/>
    <property type="match status" value="1"/>
</dbReference>
<dbReference type="PANTHER" id="PTHR13479">
    <property type="entry name" value="30S RIBOSOMAL PROTEIN S18"/>
    <property type="match status" value="1"/>
</dbReference>
<dbReference type="PANTHER" id="PTHR13479:SF40">
    <property type="entry name" value="SMALL RIBOSOMAL SUBUNIT PROTEIN BS18M"/>
    <property type="match status" value="1"/>
</dbReference>
<dbReference type="Pfam" id="PF01084">
    <property type="entry name" value="Ribosomal_S18"/>
    <property type="match status" value="1"/>
</dbReference>
<dbReference type="PRINTS" id="PR00974">
    <property type="entry name" value="RIBOSOMALS18"/>
</dbReference>
<dbReference type="SUPFAM" id="SSF46911">
    <property type="entry name" value="Ribosomal protein S18"/>
    <property type="match status" value="1"/>
</dbReference>
<feature type="chain" id="PRO_1000003652" description="Small ribosomal subunit protein bS18">
    <location>
        <begin position="1"/>
        <end position="87"/>
    </location>
</feature>
<sequence>MAERRKYKKRYCKYCEAKVDFMDYKDVGALRFSLSERYKIMPRRLTGNCKRHQDMIATVIKRARAAALVPYTVTRNTVVTAPFENLR</sequence>
<keyword id="KW-1185">Reference proteome</keyword>
<keyword id="KW-0687">Ribonucleoprotein</keyword>
<keyword id="KW-0689">Ribosomal protein</keyword>
<keyword id="KW-0694">RNA-binding</keyword>
<keyword id="KW-0699">rRNA-binding</keyword>
<accession>Q30PZ2</accession>
<name>RS18_SULDN</name>